<sequence>MADFSDFHVADIALAGWGRKELNIAETEMPGLMATRDEYHAAQPLRGARIAGSLHMTVQTAVLIETLTALGAEVRWASCNIFSTQDHAAAAIAAAGIPVFAFKGESLDEYWEFSHKIFEWPEGQPANMILDDGGDATLLLMLGSKAEKDIGVIAHPTNEEETALFASIKRHLAIDPHWYSKRLEHIQGVTEETTTGVHRLYQLEKDGHLPFPAINVNDSVTKSKFDNLYGCRESLVDGIKRATDVMVAGKVAVVLGYGDVGKGCAQSLRGLGATVWVTEIDPICALQAAMEGYRVVRMDEVADQADIFVTATGNVGVITHEHMKKMRNNAIICNIGHFDSEIEVASLRQYQWENIKPQVDHIIFPDGKRVILLAEGRLVNLGCATGHPSFVMSNSFTNQVLAQIELFANGHKYEKKVYVLPKHLDEKVARLHLARIGARLTELSDQQAAYISVPKQGPYKPDHYRY</sequence>
<protein>
    <recommendedName>
        <fullName evidence="1">Adenosylhomocysteinase</fullName>
        <ecNumber evidence="1">3.13.2.1</ecNumber>
    </recommendedName>
    <alternativeName>
        <fullName evidence="1">S-adenosyl-L-homocysteine hydrolase</fullName>
        <shortName evidence="1">AdoHcyase</shortName>
    </alternativeName>
</protein>
<dbReference type="EC" id="3.13.2.1" evidence="1"/>
<dbReference type="EMBL" id="AE016825">
    <property type="protein sequence ID" value="AAQ58639.1"/>
    <property type="molecule type" value="Genomic_DNA"/>
</dbReference>
<dbReference type="RefSeq" id="WP_011134520.1">
    <property type="nucleotide sequence ID" value="NC_005085.1"/>
</dbReference>
<dbReference type="SMR" id="Q7NZF7"/>
<dbReference type="STRING" id="243365.CV_0965"/>
<dbReference type="KEGG" id="cvi:CV_0965"/>
<dbReference type="eggNOG" id="COG0499">
    <property type="taxonomic scope" value="Bacteria"/>
</dbReference>
<dbReference type="HOGENOM" id="CLU_025194_2_1_4"/>
<dbReference type="OrthoDB" id="9802717at2"/>
<dbReference type="UniPathway" id="UPA00314">
    <property type="reaction ID" value="UER00076"/>
</dbReference>
<dbReference type="Proteomes" id="UP000001424">
    <property type="component" value="Chromosome"/>
</dbReference>
<dbReference type="GO" id="GO:0005829">
    <property type="term" value="C:cytosol"/>
    <property type="evidence" value="ECO:0007669"/>
    <property type="project" value="TreeGrafter"/>
</dbReference>
<dbReference type="GO" id="GO:0004013">
    <property type="term" value="F:adenosylhomocysteinase activity"/>
    <property type="evidence" value="ECO:0007669"/>
    <property type="project" value="UniProtKB-UniRule"/>
</dbReference>
<dbReference type="GO" id="GO:0071269">
    <property type="term" value="P:L-homocysteine biosynthetic process"/>
    <property type="evidence" value="ECO:0007669"/>
    <property type="project" value="UniProtKB-UniRule"/>
</dbReference>
<dbReference type="GO" id="GO:0006730">
    <property type="term" value="P:one-carbon metabolic process"/>
    <property type="evidence" value="ECO:0007669"/>
    <property type="project" value="UniProtKB-KW"/>
</dbReference>
<dbReference type="GO" id="GO:0033353">
    <property type="term" value="P:S-adenosylmethionine cycle"/>
    <property type="evidence" value="ECO:0007669"/>
    <property type="project" value="TreeGrafter"/>
</dbReference>
<dbReference type="CDD" id="cd00401">
    <property type="entry name" value="SAHH"/>
    <property type="match status" value="1"/>
</dbReference>
<dbReference type="FunFam" id="3.40.50.720:FF:000004">
    <property type="entry name" value="Adenosylhomocysteinase"/>
    <property type="match status" value="1"/>
</dbReference>
<dbReference type="Gene3D" id="3.40.50.1480">
    <property type="entry name" value="Adenosylhomocysteinase-like"/>
    <property type="match status" value="1"/>
</dbReference>
<dbReference type="Gene3D" id="3.40.50.720">
    <property type="entry name" value="NAD(P)-binding Rossmann-like Domain"/>
    <property type="match status" value="1"/>
</dbReference>
<dbReference type="HAMAP" id="MF_00563">
    <property type="entry name" value="AdoHcyase"/>
    <property type="match status" value="1"/>
</dbReference>
<dbReference type="InterPro" id="IPR042172">
    <property type="entry name" value="Adenosylhomocyst_ase-like_sf"/>
</dbReference>
<dbReference type="InterPro" id="IPR000043">
    <property type="entry name" value="Adenosylhomocysteinase-like"/>
</dbReference>
<dbReference type="InterPro" id="IPR015878">
    <property type="entry name" value="Ado_hCys_hydrolase_NAD-bd"/>
</dbReference>
<dbReference type="InterPro" id="IPR036291">
    <property type="entry name" value="NAD(P)-bd_dom_sf"/>
</dbReference>
<dbReference type="InterPro" id="IPR020082">
    <property type="entry name" value="S-Ado-L-homoCys_hydrolase_CS"/>
</dbReference>
<dbReference type="NCBIfam" id="TIGR00936">
    <property type="entry name" value="ahcY"/>
    <property type="match status" value="1"/>
</dbReference>
<dbReference type="NCBIfam" id="NF004005">
    <property type="entry name" value="PRK05476.2-3"/>
    <property type="match status" value="1"/>
</dbReference>
<dbReference type="PANTHER" id="PTHR23420">
    <property type="entry name" value="ADENOSYLHOMOCYSTEINASE"/>
    <property type="match status" value="1"/>
</dbReference>
<dbReference type="PANTHER" id="PTHR23420:SF0">
    <property type="entry name" value="ADENOSYLHOMOCYSTEINASE"/>
    <property type="match status" value="1"/>
</dbReference>
<dbReference type="Pfam" id="PF05221">
    <property type="entry name" value="AdoHcyase"/>
    <property type="match status" value="1"/>
</dbReference>
<dbReference type="Pfam" id="PF00670">
    <property type="entry name" value="AdoHcyase_NAD"/>
    <property type="match status" value="1"/>
</dbReference>
<dbReference type="PIRSF" id="PIRSF001109">
    <property type="entry name" value="Ad_hcy_hydrolase"/>
    <property type="match status" value="1"/>
</dbReference>
<dbReference type="SMART" id="SM00996">
    <property type="entry name" value="AdoHcyase"/>
    <property type="match status" value="1"/>
</dbReference>
<dbReference type="SMART" id="SM00997">
    <property type="entry name" value="AdoHcyase_NAD"/>
    <property type="match status" value="1"/>
</dbReference>
<dbReference type="SUPFAM" id="SSF52283">
    <property type="entry name" value="Formate/glycerate dehydrogenase catalytic domain-like"/>
    <property type="match status" value="1"/>
</dbReference>
<dbReference type="SUPFAM" id="SSF51735">
    <property type="entry name" value="NAD(P)-binding Rossmann-fold domains"/>
    <property type="match status" value="1"/>
</dbReference>
<dbReference type="PROSITE" id="PS00738">
    <property type="entry name" value="ADOHCYASE_1"/>
    <property type="match status" value="1"/>
</dbReference>
<dbReference type="PROSITE" id="PS00739">
    <property type="entry name" value="ADOHCYASE_2"/>
    <property type="match status" value="1"/>
</dbReference>
<feature type="chain" id="PRO_0000116957" description="Adenosylhomocysteinase">
    <location>
        <begin position="1"/>
        <end position="466"/>
    </location>
</feature>
<feature type="binding site" evidence="1">
    <location>
        <position position="57"/>
    </location>
    <ligand>
        <name>substrate</name>
    </ligand>
</feature>
<feature type="binding site" evidence="1">
    <location>
        <position position="132"/>
    </location>
    <ligand>
        <name>substrate</name>
    </ligand>
</feature>
<feature type="binding site" evidence="1">
    <location>
        <position position="192"/>
    </location>
    <ligand>
        <name>substrate</name>
    </ligand>
</feature>
<feature type="binding site" evidence="1">
    <location>
        <begin position="193"/>
        <end position="195"/>
    </location>
    <ligand>
        <name>NAD(+)</name>
        <dbReference type="ChEBI" id="CHEBI:57540"/>
    </ligand>
</feature>
<feature type="binding site" evidence="1">
    <location>
        <position position="222"/>
    </location>
    <ligand>
        <name>substrate</name>
    </ligand>
</feature>
<feature type="binding site" evidence="1">
    <location>
        <position position="226"/>
    </location>
    <ligand>
        <name>substrate</name>
    </ligand>
</feature>
<feature type="binding site" evidence="1">
    <location>
        <position position="227"/>
    </location>
    <ligand>
        <name>NAD(+)</name>
        <dbReference type="ChEBI" id="CHEBI:57540"/>
    </ligand>
</feature>
<feature type="binding site" evidence="1">
    <location>
        <begin position="256"/>
        <end position="261"/>
    </location>
    <ligand>
        <name>NAD(+)</name>
        <dbReference type="ChEBI" id="CHEBI:57540"/>
    </ligand>
</feature>
<feature type="binding site" evidence="1">
    <location>
        <position position="279"/>
    </location>
    <ligand>
        <name>NAD(+)</name>
        <dbReference type="ChEBI" id="CHEBI:57540"/>
    </ligand>
</feature>
<feature type="binding site" evidence="1">
    <location>
        <position position="314"/>
    </location>
    <ligand>
        <name>NAD(+)</name>
        <dbReference type="ChEBI" id="CHEBI:57540"/>
    </ligand>
</feature>
<feature type="binding site" evidence="1">
    <location>
        <begin position="335"/>
        <end position="337"/>
    </location>
    <ligand>
        <name>NAD(+)</name>
        <dbReference type="ChEBI" id="CHEBI:57540"/>
    </ligand>
</feature>
<feature type="binding site" evidence="1">
    <location>
        <position position="380"/>
    </location>
    <ligand>
        <name>NAD(+)</name>
        <dbReference type="ChEBI" id="CHEBI:57540"/>
    </ligand>
</feature>
<organism>
    <name type="scientific">Chromobacterium violaceum (strain ATCC 12472 / DSM 30191 / JCM 1249 / CCUG 213 / NBRC 12614 / NCIMB 9131 / NCTC 9757 / MK)</name>
    <dbReference type="NCBI Taxonomy" id="243365"/>
    <lineage>
        <taxon>Bacteria</taxon>
        <taxon>Pseudomonadati</taxon>
        <taxon>Pseudomonadota</taxon>
        <taxon>Betaproteobacteria</taxon>
        <taxon>Neisseriales</taxon>
        <taxon>Chromobacteriaceae</taxon>
        <taxon>Chromobacterium</taxon>
    </lineage>
</organism>
<gene>
    <name evidence="1" type="primary">ahcY</name>
    <name type="ordered locus">CV_0965</name>
</gene>
<evidence type="ECO:0000255" key="1">
    <source>
        <dbReference type="HAMAP-Rule" id="MF_00563"/>
    </source>
</evidence>
<keyword id="KW-0963">Cytoplasm</keyword>
<keyword id="KW-0378">Hydrolase</keyword>
<keyword id="KW-0520">NAD</keyword>
<keyword id="KW-0554">One-carbon metabolism</keyword>
<keyword id="KW-1185">Reference proteome</keyword>
<reference key="1">
    <citation type="journal article" date="2003" name="Proc. Natl. Acad. Sci. U.S.A.">
        <title>The complete genome sequence of Chromobacterium violaceum reveals remarkable and exploitable bacterial adaptability.</title>
        <authorList>
            <person name="Vasconcelos A.T.R."/>
            <person name="de Almeida D.F."/>
            <person name="Hungria M."/>
            <person name="Guimaraes C.T."/>
            <person name="Antonio R.V."/>
            <person name="Almeida F.C."/>
            <person name="de Almeida L.G.P."/>
            <person name="de Almeida R."/>
            <person name="Alves-Gomes J.A."/>
            <person name="Andrade E.M."/>
            <person name="Araripe J."/>
            <person name="de Araujo M.F.F."/>
            <person name="Astolfi-Filho S."/>
            <person name="Azevedo V."/>
            <person name="Baptista A.J."/>
            <person name="Bataus L.A.M."/>
            <person name="Batista J.S."/>
            <person name="Belo A."/>
            <person name="van den Berg C."/>
            <person name="Bogo M."/>
            <person name="Bonatto S."/>
            <person name="Bordignon J."/>
            <person name="Brigido M.M."/>
            <person name="Brito C.A."/>
            <person name="Brocchi M."/>
            <person name="Burity H.A."/>
            <person name="Camargo A.A."/>
            <person name="Cardoso D.D.P."/>
            <person name="Carneiro N.P."/>
            <person name="Carraro D.M."/>
            <person name="Carvalho C.M.B."/>
            <person name="Cascardo J.C.M."/>
            <person name="Cavada B.S."/>
            <person name="Chueire L.M.O."/>
            <person name="Creczynski-Pasa T.B."/>
            <person name="Cunha-Junior N.C."/>
            <person name="Fagundes N."/>
            <person name="Falcao C.L."/>
            <person name="Fantinatti F."/>
            <person name="Farias I.P."/>
            <person name="Felipe M.S.S."/>
            <person name="Ferrari L.P."/>
            <person name="Ferro J.A."/>
            <person name="Ferro M.I.T."/>
            <person name="Franco G.R."/>
            <person name="Freitas N.S.A."/>
            <person name="Furlan L.R."/>
            <person name="Gazzinelli R.T."/>
            <person name="Gomes E.A."/>
            <person name="Goncalves P.R."/>
            <person name="Grangeiro T.B."/>
            <person name="Grattapaglia D."/>
            <person name="Grisard E.C."/>
            <person name="Hanna E.S."/>
            <person name="Jardim S.N."/>
            <person name="Laurino J."/>
            <person name="Leoi L.C.T."/>
            <person name="Lima L.F.A."/>
            <person name="Loureiro M.F."/>
            <person name="Lyra M.C.C.P."/>
            <person name="Madeira H.M.F."/>
            <person name="Manfio G.P."/>
            <person name="Maranhao A.Q."/>
            <person name="Martins W.S."/>
            <person name="di Mauro S.M.Z."/>
            <person name="de Medeiros S.R.B."/>
            <person name="Meissner R.V."/>
            <person name="Moreira M.A.M."/>
            <person name="Nascimento F.F."/>
            <person name="Nicolas M.F."/>
            <person name="Oliveira J.G."/>
            <person name="Oliveira S.C."/>
            <person name="Paixao R.F.C."/>
            <person name="Parente J.A."/>
            <person name="Pedrosa F.O."/>
            <person name="Pena S.D.J."/>
            <person name="Pereira J.O."/>
            <person name="Pereira M."/>
            <person name="Pinto L.S.R.C."/>
            <person name="Pinto L.S."/>
            <person name="Porto J.I.R."/>
            <person name="Potrich D.P."/>
            <person name="Ramalho-Neto C.E."/>
            <person name="Reis A.M.M."/>
            <person name="Rigo L.U."/>
            <person name="Rondinelli E."/>
            <person name="Santos E.B.P."/>
            <person name="Santos F.R."/>
            <person name="Schneider M.P.C."/>
            <person name="Seuanez H.N."/>
            <person name="Silva A.M.R."/>
            <person name="da Silva A.L.C."/>
            <person name="Silva D.W."/>
            <person name="Silva R."/>
            <person name="Simoes I.C."/>
            <person name="Simon D."/>
            <person name="Soares C.M.A."/>
            <person name="Soares R.B.A."/>
            <person name="Souza E.M."/>
            <person name="Souza K.R.L."/>
            <person name="Souza R.C."/>
            <person name="Steffens M.B.R."/>
            <person name="Steindel M."/>
            <person name="Teixeira S.R."/>
            <person name="Urmenyi T."/>
            <person name="Vettore A."/>
            <person name="Wassem R."/>
            <person name="Zaha A."/>
            <person name="Simpson A.J.G."/>
        </authorList>
    </citation>
    <scope>NUCLEOTIDE SEQUENCE [LARGE SCALE GENOMIC DNA]</scope>
    <source>
        <strain>ATCC 12472 / DSM 30191 / JCM 1249 / CCUG 213 / NBRC 12614 / NCIMB 9131 / NCTC 9757 / MK</strain>
    </source>
</reference>
<proteinExistence type="inferred from homology"/>
<name>SAHH_CHRVO</name>
<accession>Q7NZF7</accession>
<comment type="function">
    <text evidence="1">May play a key role in the regulation of the intracellular concentration of adenosylhomocysteine.</text>
</comment>
<comment type="catalytic activity">
    <reaction evidence="1">
        <text>S-adenosyl-L-homocysteine + H2O = L-homocysteine + adenosine</text>
        <dbReference type="Rhea" id="RHEA:21708"/>
        <dbReference type="ChEBI" id="CHEBI:15377"/>
        <dbReference type="ChEBI" id="CHEBI:16335"/>
        <dbReference type="ChEBI" id="CHEBI:57856"/>
        <dbReference type="ChEBI" id="CHEBI:58199"/>
        <dbReference type="EC" id="3.13.2.1"/>
    </reaction>
</comment>
<comment type="cofactor">
    <cofactor evidence="1">
        <name>NAD(+)</name>
        <dbReference type="ChEBI" id="CHEBI:57540"/>
    </cofactor>
    <text evidence="1">Binds 1 NAD(+) per subunit.</text>
</comment>
<comment type="pathway">
    <text evidence="1">Amino-acid biosynthesis; L-homocysteine biosynthesis; L-homocysteine from S-adenosyl-L-homocysteine: step 1/1.</text>
</comment>
<comment type="subcellular location">
    <subcellularLocation>
        <location evidence="1">Cytoplasm</location>
    </subcellularLocation>
</comment>
<comment type="similarity">
    <text evidence="1">Belongs to the adenosylhomocysteinase family.</text>
</comment>